<feature type="chain" id="PRO_0000141882" description="3-isopropylmalate dehydratase small subunit">
    <location>
        <begin position="1"/>
        <end position="201"/>
    </location>
</feature>
<sequence>MEKFTKIQGIAAPMPLVNIDTDMIIPKVFLKSIQRTGFGKNLFDEMRYNRDGTEIPDFVLNKPQYRDAEILVAGDNFGCGSSREHAPWAIADFGIKCIISTSFADIFFNNSFKNGILPIVLPQEQVDILMKDAEKGANARMTVDLEAQEITTSDGEVIPFEVDAFKKHCLLNGLDDIGLTMEKAAAIDTFEAQAAQARPWV</sequence>
<protein>
    <recommendedName>
        <fullName evidence="1">3-isopropylmalate dehydratase small subunit</fullName>
        <ecNumber evidence="1">4.2.1.33</ecNumber>
    </recommendedName>
    <alternativeName>
        <fullName evidence="1">Alpha-IPM isomerase</fullName>
        <shortName evidence="1">IPMI</shortName>
    </alternativeName>
    <alternativeName>
        <fullName evidence="1">Isopropylmalate isomerase</fullName>
    </alternativeName>
</protein>
<dbReference type="EC" id="4.2.1.33" evidence="1"/>
<dbReference type="EMBL" id="CP000031">
    <property type="protein sequence ID" value="AAV93540.1"/>
    <property type="molecule type" value="Genomic_DNA"/>
</dbReference>
<dbReference type="RefSeq" id="WP_011045983.1">
    <property type="nucleotide sequence ID" value="NC_003911.12"/>
</dbReference>
<dbReference type="SMR" id="Q5LX07"/>
<dbReference type="STRING" id="246200.SPO0215"/>
<dbReference type="PaxDb" id="246200-SPO0215"/>
<dbReference type="KEGG" id="sil:SPO0215"/>
<dbReference type="eggNOG" id="COG0066">
    <property type="taxonomic scope" value="Bacteria"/>
</dbReference>
<dbReference type="HOGENOM" id="CLU_081378_0_3_5"/>
<dbReference type="OrthoDB" id="9777465at2"/>
<dbReference type="UniPathway" id="UPA00048">
    <property type="reaction ID" value="UER00071"/>
</dbReference>
<dbReference type="Proteomes" id="UP000001023">
    <property type="component" value="Chromosome"/>
</dbReference>
<dbReference type="GO" id="GO:0009316">
    <property type="term" value="C:3-isopropylmalate dehydratase complex"/>
    <property type="evidence" value="ECO:0007669"/>
    <property type="project" value="InterPro"/>
</dbReference>
<dbReference type="GO" id="GO:0003861">
    <property type="term" value="F:3-isopropylmalate dehydratase activity"/>
    <property type="evidence" value="ECO:0007669"/>
    <property type="project" value="UniProtKB-UniRule"/>
</dbReference>
<dbReference type="GO" id="GO:0009098">
    <property type="term" value="P:L-leucine biosynthetic process"/>
    <property type="evidence" value="ECO:0007669"/>
    <property type="project" value="UniProtKB-UniRule"/>
</dbReference>
<dbReference type="CDD" id="cd01577">
    <property type="entry name" value="IPMI_Swivel"/>
    <property type="match status" value="1"/>
</dbReference>
<dbReference type="FunFam" id="3.20.19.10:FF:000003">
    <property type="entry name" value="3-isopropylmalate dehydratase small subunit"/>
    <property type="match status" value="1"/>
</dbReference>
<dbReference type="Gene3D" id="3.20.19.10">
    <property type="entry name" value="Aconitase, domain 4"/>
    <property type="match status" value="1"/>
</dbReference>
<dbReference type="HAMAP" id="MF_01031">
    <property type="entry name" value="LeuD_type1"/>
    <property type="match status" value="1"/>
</dbReference>
<dbReference type="InterPro" id="IPR004431">
    <property type="entry name" value="3-IsopropMal_deHydase_ssu"/>
</dbReference>
<dbReference type="InterPro" id="IPR015928">
    <property type="entry name" value="Aconitase/3IPM_dehydase_swvl"/>
</dbReference>
<dbReference type="InterPro" id="IPR000573">
    <property type="entry name" value="AconitaseA/IPMdHydase_ssu_swvl"/>
</dbReference>
<dbReference type="InterPro" id="IPR033940">
    <property type="entry name" value="IPMI_Swivel"/>
</dbReference>
<dbReference type="InterPro" id="IPR050075">
    <property type="entry name" value="LeuD"/>
</dbReference>
<dbReference type="NCBIfam" id="TIGR00171">
    <property type="entry name" value="leuD"/>
    <property type="match status" value="1"/>
</dbReference>
<dbReference type="NCBIfam" id="NF002458">
    <property type="entry name" value="PRK01641.1"/>
    <property type="match status" value="1"/>
</dbReference>
<dbReference type="PANTHER" id="PTHR43345:SF5">
    <property type="entry name" value="3-ISOPROPYLMALATE DEHYDRATASE SMALL SUBUNIT"/>
    <property type="match status" value="1"/>
</dbReference>
<dbReference type="PANTHER" id="PTHR43345">
    <property type="entry name" value="3-ISOPROPYLMALATE DEHYDRATASE SMALL SUBUNIT 2-RELATED-RELATED"/>
    <property type="match status" value="1"/>
</dbReference>
<dbReference type="Pfam" id="PF00694">
    <property type="entry name" value="Aconitase_C"/>
    <property type="match status" value="1"/>
</dbReference>
<dbReference type="SUPFAM" id="SSF52016">
    <property type="entry name" value="LeuD/IlvD-like"/>
    <property type="match status" value="1"/>
</dbReference>
<proteinExistence type="inferred from homology"/>
<comment type="function">
    <text evidence="1">Catalyzes the isomerization between 2-isopropylmalate and 3-isopropylmalate, via the formation of 2-isopropylmaleate.</text>
</comment>
<comment type="catalytic activity">
    <reaction evidence="1">
        <text>(2R,3S)-3-isopropylmalate = (2S)-2-isopropylmalate</text>
        <dbReference type="Rhea" id="RHEA:32287"/>
        <dbReference type="ChEBI" id="CHEBI:1178"/>
        <dbReference type="ChEBI" id="CHEBI:35121"/>
        <dbReference type="EC" id="4.2.1.33"/>
    </reaction>
</comment>
<comment type="pathway">
    <text evidence="1">Amino-acid biosynthesis; L-leucine biosynthesis; L-leucine from 3-methyl-2-oxobutanoate: step 2/4.</text>
</comment>
<comment type="subunit">
    <text evidence="1">Heterodimer of LeuC and LeuD.</text>
</comment>
<comment type="similarity">
    <text evidence="1">Belongs to the LeuD family. LeuD type 1 subfamily.</text>
</comment>
<accession>Q5LX07</accession>
<evidence type="ECO:0000255" key="1">
    <source>
        <dbReference type="HAMAP-Rule" id="MF_01031"/>
    </source>
</evidence>
<organism>
    <name type="scientific">Ruegeria pomeroyi (strain ATCC 700808 / DSM 15171 / DSS-3)</name>
    <name type="common">Silicibacter pomeroyi</name>
    <dbReference type="NCBI Taxonomy" id="246200"/>
    <lineage>
        <taxon>Bacteria</taxon>
        <taxon>Pseudomonadati</taxon>
        <taxon>Pseudomonadota</taxon>
        <taxon>Alphaproteobacteria</taxon>
        <taxon>Rhodobacterales</taxon>
        <taxon>Roseobacteraceae</taxon>
        <taxon>Ruegeria</taxon>
    </lineage>
</organism>
<keyword id="KW-0028">Amino-acid biosynthesis</keyword>
<keyword id="KW-0100">Branched-chain amino acid biosynthesis</keyword>
<keyword id="KW-0432">Leucine biosynthesis</keyword>
<keyword id="KW-0456">Lyase</keyword>
<keyword id="KW-1185">Reference proteome</keyword>
<name>LEUD_RUEPO</name>
<reference key="1">
    <citation type="journal article" date="2004" name="Nature">
        <title>Genome sequence of Silicibacter pomeroyi reveals adaptations to the marine environment.</title>
        <authorList>
            <person name="Moran M.A."/>
            <person name="Buchan A."/>
            <person name="Gonzalez J.M."/>
            <person name="Heidelberg J.F."/>
            <person name="Whitman W.B."/>
            <person name="Kiene R.P."/>
            <person name="Henriksen J.R."/>
            <person name="King G.M."/>
            <person name="Belas R."/>
            <person name="Fuqua C."/>
            <person name="Brinkac L.M."/>
            <person name="Lewis M."/>
            <person name="Johri S."/>
            <person name="Weaver B."/>
            <person name="Pai G."/>
            <person name="Eisen J.A."/>
            <person name="Rahe E."/>
            <person name="Sheldon W.M."/>
            <person name="Ye W."/>
            <person name="Miller T.R."/>
            <person name="Carlton J."/>
            <person name="Rasko D.A."/>
            <person name="Paulsen I.T."/>
            <person name="Ren Q."/>
            <person name="Daugherty S.C."/>
            <person name="DeBoy R.T."/>
            <person name="Dodson R.J."/>
            <person name="Durkin A.S."/>
            <person name="Madupu R."/>
            <person name="Nelson W.C."/>
            <person name="Sullivan S.A."/>
            <person name="Rosovitz M.J."/>
            <person name="Haft D.H."/>
            <person name="Selengut J."/>
            <person name="Ward N."/>
        </authorList>
    </citation>
    <scope>NUCLEOTIDE SEQUENCE [LARGE SCALE GENOMIC DNA]</scope>
    <source>
        <strain>ATCC 700808 / DSM 15171 / DSS-3</strain>
    </source>
</reference>
<reference key="2">
    <citation type="journal article" date="2014" name="Stand. Genomic Sci.">
        <title>An updated genome annotation for the model marine bacterium Ruegeria pomeroyi DSS-3.</title>
        <authorList>
            <person name="Rivers A.R."/>
            <person name="Smith C.B."/>
            <person name="Moran M.A."/>
        </authorList>
    </citation>
    <scope>GENOME REANNOTATION</scope>
    <source>
        <strain>ATCC 700808 / DSM 15171 / DSS-3</strain>
    </source>
</reference>
<gene>
    <name evidence="1" type="primary">leuD</name>
    <name type="ordered locus">SPO0215</name>
</gene>